<keyword id="KW-0963">Cytoplasm</keyword>
<keyword id="KW-0227">DNA damage</keyword>
<keyword id="KW-0234">DNA repair</keyword>
<keyword id="KW-0378">Hydrolase</keyword>
<reference key="1">
    <citation type="submission" date="2006-12" db="EMBL/GenBank/DDBJ databases">
        <title>Complete sequence of Mycobacterium vanbaalenii PYR-1.</title>
        <authorList>
            <consortium name="US DOE Joint Genome Institute"/>
            <person name="Copeland A."/>
            <person name="Lucas S."/>
            <person name="Lapidus A."/>
            <person name="Barry K."/>
            <person name="Detter J.C."/>
            <person name="Glavina del Rio T."/>
            <person name="Hammon N."/>
            <person name="Israni S."/>
            <person name="Dalin E."/>
            <person name="Tice H."/>
            <person name="Pitluck S."/>
            <person name="Singan V."/>
            <person name="Schmutz J."/>
            <person name="Larimer F."/>
            <person name="Land M."/>
            <person name="Hauser L."/>
            <person name="Kyrpides N."/>
            <person name="Anderson I.J."/>
            <person name="Miller C."/>
            <person name="Richardson P."/>
        </authorList>
    </citation>
    <scope>NUCLEOTIDE SEQUENCE [LARGE SCALE GENOMIC DNA]</scope>
    <source>
        <strain>DSM 7251 / JCM 13017 / BCRC 16820 / KCTC 9966 / NRRL B-24157 / PYR-1</strain>
    </source>
</reference>
<comment type="function">
    <text evidence="1">Excises uracil residues from the DNA which can arise as a result of misincorporation of dUMP residues by DNA polymerase or due to deamination of cytosine.</text>
</comment>
<comment type="catalytic activity">
    <reaction evidence="1">
        <text>Hydrolyzes single-stranded DNA or mismatched double-stranded DNA and polynucleotides, releasing free uracil.</text>
        <dbReference type="EC" id="3.2.2.27"/>
    </reaction>
</comment>
<comment type="subcellular location">
    <subcellularLocation>
        <location evidence="1">Cytoplasm</location>
    </subcellularLocation>
</comment>
<comment type="similarity">
    <text evidence="1">Belongs to the uracil-DNA glycosylase (UDG) superfamily. UNG family.</text>
</comment>
<organism>
    <name type="scientific">Mycolicibacterium vanbaalenii (strain DSM 7251 / JCM 13017 / BCRC 16820 / KCTC 9966 / NRRL B-24157 / PYR-1)</name>
    <name type="common">Mycobacterium vanbaalenii</name>
    <dbReference type="NCBI Taxonomy" id="350058"/>
    <lineage>
        <taxon>Bacteria</taxon>
        <taxon>Bacillati</taxon>
        <taxon>Actinomycetota</taxon>
        <taxon>Actinomycetes</taxon>
        <taxon>Mycobacteriales</taxon>
        <taxon>Mycobacteriaceae</taxon>
        <taxon>Mycolicibacterium</taxon>
    </lineage>
</organism>
<dbReference type="EC" id="3.2.2.27" evidence="1"/>
<dbReference type="EMBL" id="CP000511">
    <property type="protein sequence ID" value="ABM12967.1"/>
    <property type="molecule type" value="Genomic_DNA"/>
</dbReference>
<dbReference type="RefSeq" id="WP_011779381.1">
    <property type="nucleotide sequence ID" value="NC_008726.1"/>
</dbReference>
<dbReference type="SMR" id="A1T717"/>
<dbReference type="STRING" id="350058.Mvan_2152"/>
<dbReference type="KEGG" id="mva:Mvan_2152"/>
<dbReference type="eggNOG" id="COG0692">
    <property type="taxonomic scope" value="Bacteria"/>
</dbReference>
<dbReference type="HOGENOM" id="CLU_032162_3_1_11"/>
<dbReference type="Proteomes" id="UP000009159">
    <property type="component" value="Chromosome"/>
</dbReference>
<dbReference type="GO" id="GO:0005737">
    <property type="term" value="C:cytoplasm"/>
    <property type="evidence" value="ECO:0007669"/>
    <property type="project" value="UniProtKB-SubCell"/>
</dbReference>
<dbReference type="GO" id="GO:0004844">
    <property type="term" value="F:uracil DNA N-glycosylase activity"/>
    <property type="evidence" value="ECO:0007669"/>
    <property type="project" value="UniProtKB-UniRule"/>
</dbReference>
<dbReference type="GO" id="GO:0097510">
    <property type="term" value="P:base-excision repair, AP site formation via deaminated base removal"/>
    <property type="evidence" value="ECO:0007669"/>
    <property type="project" value="TreeGrafter"/>
</dbReference>
<dbReference type="CDD" id="cd10027">
    <property type="entry name" value="UDG-F1-like"/>
    <property type="match status" value="1"/>
</dbReference>
<dbReference type="FunFam" id="3.40.470.10:FF:000006">
    <property type="entry name" value="Uracil-DNA glycosylase"/>
    <property type="match status" value="1"/>
</dbReference>
<dbReference type="Gene3D" id="3.40.470.10">
    <property type="entry name" value="Uracil-DNA glycosylase-like domain"/>
    <property type="match status" value="1"/>
</dbReference>
<dbReference type="HAMAP" id="MF_00148">
    <property type="entry name" value="UDG"/>
    <property type="match status" value="1"/>
</dbReference>
<dbReference type="InterPro" id="IPR002043">
    <property type="entry name" value="UDG_fam1"/>
</dbReference>
<dbReference type="InterPro" id="IPR018085">
    <property type="entry name" value="Ura-DNA_Glyclase_AS"/>
</dbReference>
<dbReference type="InterPro" id="IPR005122">
    <property type="entry name" value="Uracil-DNA_glycosylase-like"/>
</dbReference>
<dbReference type="InterPro" id="IPR036895">
    <property type="entry name" value="Uracil-DNA_glycosylase-like_sf"/>
</dbReference>
<dbReference type="NCBIfam" id="NF003588">
    <property type="entry name" value="PRK05254.1-1"/>
    <property type="match status" value="1"/>
</dbReference>
<dbReference type="NCBIfam" id="NF003592">
    <property type="entry name" value="PRK05254.1-5"/>
    <property type="match status" value="1"/>
</dbReference>
<dbReference type="NCBIfam" id="TIGR00628">
    <property type="entry name" value="ung"/>
    <property type="match status" value="1"/>
</dbReference>
<dbReference type="PANTHER" id="PTHR11264">
    <property type="entry name" value="URACIL-DNA GLYCOSYLASE"/>
    <property type="match status" value="1"/>
</dbReference>
<dbReference type="PANTHER" id="PTHR11264:SF0">
    <property type="entry name" value="URACIL-DNA GLYCOSYLASE"/>
    <property type="match status" value="1"/>
</dbReference>
<dbReference type="Pfam" id="PF03167">
    <property type="entry name" value="UDG"/>
    <property type="match status" value="1"/>
</dbReference>
<dbReference type="SMART" id="SM00986">
    <property type="entry name" value="UDG"/>
    <property type="match status" value="1"/>
</dbReference>
<dbReference type="SMART" id="SM00987">
    <property type="entry name" value="UreE_C"/>
    <property type="match status" value="1"/>
</dbReference>
<dbReference type="SUPFAM" id="SSF52141">
    <property type="entry name" value="Uracil-DNA glycosylase-like"/>
    <property type="match status" value="1"/>
</dbReference>
<dbReference type="PROSITE" id="PS00130">
    <property type="entry name" value="U_DNA_GLYCOSYLASE"/>
    <property type="match status" value="1"/>
</dbReference>
<evidence type="ECO:0000255" key="1">
    <source>
        <dbReference type="HAMAP-Rule" id="MF_00148"/>
    </source>
</evidence>
<protein>
    <recommendedName>
        <fullName evidence="1">Uracil-DNA glycosylase</fullName>
        <shortName evidence="1">UDG</shortName>
        <ecNumber evidence="1">3.2.2.27</ecNumber>
    </recommendedName>
</protein>
<sequence length="225" mass="24651">MTARPLSELIDDGWASALAPVESQVTQMGEFLRAELADGHRYLPAGENVLRAFTFPLEKVRVLIVGQDPYPTPGHAVGLSFSVAPDVRPLPRSLDNIFREYREDLGYPTPSTGDLTPWCEQGVMLLNRVLTVRPGTPASHRGKGWEPVTECAIRALVARQQPMVAVLWGRDASTLKPMLGDTAVIESPHPSPLSASRGFFGSKPFSRANELLTQMGAEPVDWRLP</sequence>
<accession>A1T717</accession>
<gene>
    <name evidence="1" type="primary">ung</name>
    <name type="ordered locus">Mvan_2152</name>
</gene>
<name>UNG_MYCVP</name>
<proteinExistence type="inferred from homology"/>
<feature type="chain" id="PRO_1000009919" description="Uracil-DNA glycosylase">
    <location>
        <begin position="1"/>
        <end position="225"/>
    </location>
</feature>
<feature type="active site" description="Proton acceptor" evidence="1">
    <location>
        <position position="68"/>
    </location>
</feature>